<name>CSRA_HAEIG</name>
<organism>
    <name type="scientific">Haemophilus influenzae (strain PittGG)</name>
    <dbReference type="NCBI Taxonomy" id="374931"/>
    <lineage>
        <taxon>Bacteria</taxon>
        <taxon>Pseudomonadati</taxon>
        <taxon>Pseudomonadota</taxon>
        <taxon>Gammaproteobacteria</taxon>
        <taxon>Pasteurellales</taxon>
        <taxon>Pasteurellaceae</taxon>
        <taxon>Haemophilus</taxon>
    </lineage>
</organism>
<gene>
    <name evidence="1" type="primary">csrA</name>
    <name type="ordered locus">CGSHiGG_07560</name>
</gene>
<dbReference type="EMBL" id="CP000672">
    <property type="protein sequence ID" value="ABR00371.1"/>
    <property type="molecule type" value="Genomic_DNA"/>
</dbReference>
<dbReference type="SMR" id="A5UHW5"/>
<dbReference type="KEGG" id="hiq:CGSHiGG_07560"/>
<dbReference type="HOGENOM" id="CLU_164837_2_1_6"/>
<dbReference type="Proteomes" id="UP000001990">
    <property type="component" value="Chromosome"/>
</dbReference>
<dbReference type="GO" id="GO:0005829">
    <property type="term" value="C:cytosol"/>
    <property type="evidence" value="ECO:0007669"/>
    <property type="project" value="TreeGrafter"/>
</dbReference>
<dbReference type="GO" id="GO:0048027">
    <property type="term" value="F:mRNA 5'-UTR binding"/>
    <property type="evidence" value="ECO:0007669"/>
    <property type="project" value="UniProtKB-UniRule"/>
</dbReference>
<dbReference type="GO" id="GO:0006402">
    <property type="term" value="P:mRNA catabolic process"/>
    <property type="evidence" value="ECO:0007669"/>
    <property type="project" value="InterPro"/>
</dbReference>
<dbReference type="GO" id="GO:0045947">
    <property type="term" value="P:negative regulation of translational initiation"/>
    <property type="evidence" value="ECO:0007669"/>
    <property type="project" value="UniProtKB-UniRule"/>
</dbReference>
<dbReference type="GO" id="GO:0045948">
    <property type="term" value="P:positive regulation of translational initiation"/>
    <property type="evidence" value="ECO:0007669"/>
    <property type="project" value="UniProtKB-UniRule"/>
</dbReference>
<dbReference type="GO" id="GO:0006109">
    <property type="term" value="P:regulation of carbohydrate metabolic process"/>
    <property type="evidence" value="ECO:0007669"/>
    <property type="project" value="UniProtKB-UniRule"/>
</dbReference>
<dbReference type="FunFam" id="2.60.40.4380:FF:000001">
    <property type="entry name" value="Translational regulator CsrA"/>
    <property type="match status" value="1"/>
</dbReference>
<dbReference type="Gene3D" id="2.60.40.4380">
    <property type="entry name" value="Translational regulator CsrA"/>
    <property type="match status" value="1"/>
</dbReference>
<dbReference type="HAMAP" id="MF_00167">
    <property type="entry name" value="CsrA"/>
    <property type="match status" value="1"/>
</dbReference>
<dbReference type="InterPro" id="IPR003751">
    <property type="entry name" value="CsrA"/>
</dbReference>
<dbReference type="InterPro" id="IPR036107">
    <property type="entry name" value="CsrA_sf"/>
</dbReference>
<dbReference type="NCBIfam" id="TIGR00202">
    <property type="entry name" value="csrA"/>
    <property type="match status" value="1"/>
</dbReference>
<dbReference type="NCBIfam" id="NF002469">
    <property type="entry name" value="PRK01712.1"/>
    <property type="match status" value="1"/>
</dbReference>
<dbReference type="PANTHER" id="PTHR34984">
    <property type="entry name" value="CARBON STORAGE REGULATOR"/>
    <property type="match status" value="1"/>
</dbReference>
<dbReference type="PANTHER" id="PTHR34984:SF1">
    <property type="entry name" value="CARBON STORAGE REGULATOR"/>
    <property type="match status" value="1"/>
</dbReference>
<dbReference type="Pfam" id="PF02599">
    <property type="entry name" value="CsrA"/>
    <property type="match status" value="1"/>
</dbReference>
<dbReference type="SUPFAM" id="SSF117130">
    <property type="entry name" value="CsrA-like"/>
    <property type="match status" value="1"/>
</dbReference>
<proteinExistence type="inferred from homology"/>
<reference key="1">
    <citation type="journal article" date="2007" name="Genome Biol.">
        <title>Characterization and modeling of the Haemophilus influenzae core and supragenomes based on the complete genomic sequences of Rd and 12 clinical nontypeable strains.</title>
        <authorList>
            <person name="Hogg J.S."/>
            <person name="Hu F.Z."/>
            <person name="Janto B."/>
            <person name="Boissy R."/>
            <person name="Hayes J."/>
            <person name="Keefe R."/>
            <person name="Post J.C."/>
            <person name="Ehrlich G.D."/>
        </authorList>
    </citation>
    <scope>NUCLEOTIDE SEQUENCE [LARGE SCALE GENOMIC DNA]</scope>
    <source>
        <strain>PittGG</strain>
    </source>
</reference>
<protein>
    <recommendedName>
        <fullName evidence="1">Translational regulator CsrA</fullName>
    </recommendedName>
    <alternativeName>
        <fullName evidence="1">Carbon storage regulator</fullName>
    </alternativeName>
</protein>
<keyword id="KW-0010">Activator</keyword>
<keyword id="KW-0963">Cytoplasm</keyword>
<keyword id="KW-0678">Repressor</keyword>
<keyword id="KW-0694">RNA-binding</keyword>
<keyword id="KW-0810">Translation regulation</keyword>
<sequence>MLILTRKVGESVLIGDDISITVLSVRGNQVKLGVEAPKEVSVHREEIYQRIKQTKDEPYLGSS</sequence>
<evidence type="ECO:0000255" key="1">
    <source>
        <dbReference type="HAMAP-Rule" id="MF_00167"/>
    </source>
</evidence>
<accession>A5UHW5</accession>
<comment type="function">
    <text evidence="1">A key translational regulator that binds mRNA to regulate translation initiation and/or mRNA stability. Mediates global changes in gene expression, shifting from rapid growth to stress survival by linking envelope stress, the stringent response and the catabolite repression systems. Usually binds in the 5'-UTR; binding at or near the Shine-Dalgarno sequence prevents ribosome-binding, repressing translation, binding elsewhere in the 5'-UTR can activate translation and/or stabilize the mRNA. Its function is antagonized by small RNA(s).</text>
</comment>
<comment type="subunit">
    <text evidence="1">Homodimer; the beta-strands of each monomer intercalate to form a hydrophobic core, while the alpha-helices form wings that extend away from the core.</text>
</comment>
<comment type="subcellular location">
    <subcellularLocation>
        <location evidence="1">Cytoplasm</location>
    </subcellularLocation>
</comment>
<comment type="similarity">
    <text evidence="1">Belongs to the CsrA/RsmA family.</text>
</comment>
<feature type="chain" id="PRO_1000023388" description="Translational regulator CsrA">
    <location>
        <begin position="1"/>
        <end position="63"/>
    </location>
</feature>